<comment type="function">
    <text evidence="1">NDH shuttles electrons from NAD(P)H:plastoquinone, via FMN and iron-sulfur (Fe-S) centers, to quinones in the photosynthetic chain and possibly in a chloroplast respiratory chain. The immediate electron acceptor for the enzyme in this species is believed to be plastoquinone. Couples the redox reaction to proton translocation, and thus conserves the redox energy in a proton gradient.</text>
</comment>
<comment type="catalytic activity">
    <reaction evidence="1">
        <text>a plastoquinone + NADH + (n+1) H(+)(in) = a plastoquinol + NAD(+) + n H(+)(out)</text>
        <dbReference type="Rhea" id="RHEA:42608"/>
        <dbReference type="Rhea" id="RHEA-COMP:9561"/>
        <dbReference type="Rhea" id="RHEA-COMP:9562"/>
        <dbReference type="ChEBI" id="CHEBI:15378"/>
        <dbReference type="ChEBI" id="CHEBI:17757"/>
        <dbReference type="ChEBI" id="CHEBI:57540"/>
        <dbReference type="ChEBI" id="CHEBI:57945"/>
        <dbReference type="ChEBI" id="CHEBI:62192"/>
    </reaction>
</comment>
<comment type="catalytic activity">
    <reaction evidence="1">
        <text>a plastoquinone + NADPH + (n+1) H(+)(in) = a plastoquinol + NADP(+) + n H(+)(out)</text>
        <dbReference type="Rhea" id="RHEA:42612"/>
        <dbReference type="Rhea" id="RHEA-COMP:9561"/>
        <dbReference type="Rhea" id="RHEA-COMP:9562"/>
        <dbReference type="ChEBI" id="CHEBI:15378"/>
        <dbReference type="ChEBI" id="CHEBI:17757"/>
        <dbReference type="ChEBI" id="CHEBI:57783"/>
        <dbReference type="ChEBI" id="CHEBI:58349"/>
        <dbReference type="ChEBI" id="CHEBI:62192"/>
    </reaction>
</comment>
<comment type="subunit">
    <text evidence="1">NDH is composed of at least 16 different subunits, 5 of which are encoded in the nucleus.</text>
</comment>
<comment type="subcellular location">
    <subcellularLocation>
        <location evidence="1">Plastid</location>
        <location evidence="1">Chloroplast thylakoid membrane</location>
        <topology evidence="1">Multi-pass membrane protein</topology>
    </subcellularLocation>
</comment>
<comment type="similarity">
    <text evidence="1">Belongs to the complex I subunit 2 family.</text>
</comment>
<keyword id="KW-0150">Chloroplast</keyword>
<keyword id="KW-0472">Membrane</keyword>
<keyword id="KW-0520">NAD</keyword>
<keyword id="KW-0521">NADP</keyword>
<keyword id="KW-0934">Plastid</keyword>
<keyword id="KW-0618">Plastoquinone</keyword>
<keyword id="KW-0874">Quinone</keyword>
<keyword id="KW-0793">Thylakoid</keyword>
<keyword id="KW-1278">Translocase</keyword>
<keyword id="KW-0812">Transmembrane</keyword>
<keyword id="KW-1133">Transmembrane helix</keyword>
<keyword id="KW-0813">Transport</keyword>
<evidence type="ECO:0000255" key="1">
    <source>
        <dbReference type="HAMAP-Rule" id="MF_00445"/>
    </source>
</evidence>
<reference key="1">
    <citation type="journal article" date="2006" name="Mol. Genet. Genomics">
        <title>The chloroplast genome of Nicotiana sylvestris and Nicotiana tomentosiformis: complete sequencing confirms that the Nicotiana sylvestris progenitor is the maternal genome donor of Nicotiana tabacum.</title>
        <authorList>
            <person name="Yukawa M."/>
            <person name="Tsudzuki T."/>
            <person name="Sugiura M."/>
        </authorList>
    </citation>
    <scope>NUCLEOTIDE SEQUENCE [LARGE SCALE GENOMIC DNA]</scope>
</reference>
<organism>
    <name type="scientific">Nicotiana tomentosiformis</name>
    <name type="common">Tobacco</name>
    <dbReference type="NCBI Taxonomy" id="4098"/>
    <lineage>
        <taxon>Eukaryota</taxon>
        <taxon>Viridiplantae</taxon>
        <taxon>Streptophyta</taxon>
        <taxon>Embryophyta</taxon>
        <taxon>Tracheophyta</taxon>
        <taxon>Spermatophyta</taxon>
        <taxon>Magnoliopsida</taxon>
        <taxon>eudicotyledons</taxon>
        <taxon>Gunneridae</taxon>
        <taxon>Pentapetalae</taxon>
        <taxon>asterids</taxon>
        <taxon>lamiids</taxon>
        <taxon>Solanales</taxon>
        <taxon>Solanaceae</taxon>
        <taxon>Nicotianoideae</taxon>
        <taxon>Nicotianeae</taxon>
        <taxon>Nicotiana</taxon>
    </lineage>
</organism>
<sequence>MIWHVQNENFILDSTRIFMKAFHLLLFDGSLIFPECILIFGLILLLMIDSTSDQKDIPWLYFISSTSLVMSITALLFRWREEPMISFSGNFQTNNFNEIFQFLILLCSTLCIPLSVEYIECTEMAITEFLLFVLTATLGGMFLCGANDLITIFVAPECFSLCSYLLSGYTKKDVRSNEATMKYLLMGGASSSILVHGFSWLYGSSGGEIELQEIVNGLINTQMYNSPGISIALIFITVGIGFKLSPAPSHQWTPDVYEGSPTPVVAFLSVTSKVAASASATRIFDIPFYFSSNEWHLLLEILAILSMILGNLIAITQTSMKRMLAYSSIGQIGYVIIGIIVGDSNDGYASMITYMLFYISMNLGTFACIVLFGLRTGTDNIRDYAGLYTKDPFLALSLALCLLSLGGLPPLAGFFGKLYLFWCGWQAGLYFLVLIGLLTSVVSIYYYLKIIKLLMTGRNQEITPHVRNYRRSPLRSNNSIELSMIVCVIASTIPGISMNPIIAIAQDSLF</sequence>
<geneLocation type="chloroplast"/>
<gene>
    <name evidence="1" type="primary">ndhB1</name>
</gene>
<name>NU2C1_NICTO</name>
<feature type="chain" id="PRO_0000275603" description="NAD(P)H-quinone oxidoreductase subunit 2 A, chloroplastic">
    <location>
        <begin position="1"/>
        <end position="510"/>
    </location>
</feature>
<feature type="transmembrane region" description="Helical" evidence="1">
    <location>
        <begin position="24"/>
        <end position="44"/>
    </location>
</feature>
<feature type="transmembrane region" description="Helical" evidence="1">
    <location>
        <begin position="57"/>
        <end position="77"/>
    </location>
</feature>
<feature type="transmembrane region" description="Helical" evidence="1">
    <location>
        <begin position="99"/>
        <end position="119"/>
    </location>
</feature>
<feature type="transmembrane region" description="Helical" evidence="1">
    <location>
        <begin position="124"/>
        <end position="144"/>
    </location>
</feature>
<feature type="transmembrane region" description="Helical" evidence="1">
    <location>
        <begin position="149"/>
        <end position="169"/>
    </location>
</feature>
<feature type="transmembrane region" description="Helical" evidence="1">
    <location>
        <begin position="183"/>
        <end position="203"/>
    </location>
</feature>
<feature type="transmembrane region" description="Helical" evidence="1">
    <location>
        <begin position="227"/>
        <end position="247"/>
    </location>
</feature>
<feature type="transmembrane region" description="Helical" evidence="1">
    <location>
        <begin position="295"/>
        <end position="315"/>
    </location>
</feature>
<feature type="transmembrane region" description="Helical" evidence="1">
    <location>
        <begin position="323"/>
        <end position="343"/>
    </location>
</feature>
<feature type="transmembrane region" description="Helical" evidence="1">
    <location>
        <begin position="354"/>
        <end position="374"/>
    </location>
</feature>
<feature type="transmembrane region" description="Helical" evidence="1">
    <location>
        <begin position="395"/>
        <end position="415"/>
    </location>
</feature>
<feature type="transmembrane region" description="Helical" evidence="1">
    <location>
        <begin position="418"/>
        <end position="438"/>
    </location>
</feature>
<feature type="transmembrane region" description="Helical" evidence="1">
    <location>
        <begin position="484"/>
        <end position="504"/>
    </location>
</feature>
<proteinExistence type="inferred from homology"/>
<protein>
    <recommendedName>
        <fullName evidence="1">NAD(P)H-quinone oxidoreductase subunit 2 A, chloroplastic</fullName>
        <ecNumber evidence="1">7.1.1.-</ecNumber>
    </recommendedName>
    <alternativeName>
        <fullName evidence="1">NAD(P)H dehydrogenase, subunit 2 A</fullName>
    </alternativeName>
    <alternativeName>
        <fullName evidence="1">NADH-plastoquinone oxidoreductase subunit 2 A</fullName>
    </alternativeName>
</protein>
<dbReference type="EC" id="7.1.1.-" evidence="1"/>
<dbReference type="EMBL" id="AB240139">
    <property type="protein sequence ID" value="BAE48052.1"/>
    <property type="molecule type" value="Genomic_DNA"/>
</dbReference>
<dbReference type="SMR" id="P0CD00"/>
<dbReference type="KEGG" id="nto:3776347"/>
<dbReference type="KEGG" id="nto:3776348"/>
<dbReference type="OrthoDB" id="1712451at2759"/>
<dbReference type="GO" id="GO:0009535">
    <property type="term" value="C:chloroplast thylakoid membrane"/>
    <property type="evidence" value="ECO:0007669"/>
    <property type="project" value="UniProtKB-SubCell"/>
</dbReference>
<dbReference type="GO" id="GO:0008137">
    <property type="term" value="F:NADH dehydrogenase (ubiquinone) activity"/>
    <property type="evidence" value="ECO:0007669"/>
    <property type="project" value="InterPro"/>
</dbReference>
<dbReference type="GO" id="GO:0048038">
    <property type="term" value="F:quinone binding"/>
    <property type="evidence" value="ECO:0007669"/>
    <property type="project" value="UniProtKB-KW"/>
</dbReference>
<dbReference type="GO" id="GO:0042773">
    <property type="term" value="P:ATP synthesis coupled electron transport"/>
    <property type="evidence" value="ECO:0007669"/>
    <property type="project" value="InterPro"/>
</dbReference>
<dbReference type="GO" id="GO:0019684">
    <property type="term" value="P:photosynthesis, light reaction"/>
    <property type="evidence" value="ECO:0007669"/>
    <property type="project" value="UniProtKB-UniRule"/>
</dbReference>
<dbReference type="HAMAP" id="MF_00445">
    <property type="entry name" value="NDH1_NuoN_1"/>
    <property type="match status" value="1"/>
</dbReference>
<dbReference type="InterPro" id="IPR010096">
    <property type="entry name" value="NADH-Q_OxRdtase_suN/2"/>
</dbReference>
<dbReference type="InterPro" id="IPR001750">
    <property type="entry name" value="ND/Mrp_TM"/>
</dbReference>
<dbReference type="InterPro" id="IPR045693">
    <property type="entry name" value="Ndh2_N"/>
</dbReference>
<dbReference type="NCBIfam" id="TIGR01770">
    <property type="entry name" value="NDH_I_N"/>
    <property type="match status" value="1"/>
</dbReference>
<dbReference type="NCBIfam" id="NF002701">
    <property type="entry name" value="PRK02504.1"/>
    <property type="match status" value="1"/>
</dbReference>
<dbReference type="PANTHER" id="PTHR22773">
    <property type="entry name" value="NADH DEHYDROGENASE"/>
    <property type="match status" value="1"/>
</dbReference>
<dbReference type="Pfam" id="PF19530">
    <property type="entry name" value="Ndh2_N"/>
    <property type="match status" value="1"/>
</dbReference>
<dbReference type="Pfam" id="PF00361">
    <property type="entry name" value="Proton_antipo_M"/>
    <property type="match status" value="1"/>
</dbReference>
<dbReference type="PRINTS" id="PR01434">
    <property type="entry name" value="NADHDHGNASE5"/>
</dbReference>
<accession>P0CD00</accession>
<accession>Q33BY3</accession>